<organism>
    <name type="scientific">Rotavirus A (strain RVA/SA11-FEM/G3P6[1])</name>
    <name type="common">RV-A</name>
    <name type="synonym">Simian Agent 11 (strain FEM)</name>
    <dbReference type="NCBI Taxonomy" id="10925"/>
    <lineage>
        <taxon>Viruses</taxon>
        <taxon>Riboviria</taxon>
        <taxon>Orthornavirae</taxon>
        <taxon>Duplornaviricota</taxon>
        <taxon>Resentoviricetes</taxon>
        <taxon>Reovirales</taxon>
        <taxon>Sedoreoviridae</taxon>
        <taxon>Rotavirus</taxon>
        <taxon>Rotavirus A</taxon>
    </lineage>
</organism>
<proteinExistence type="evidence at protein level"/>
<reference key="1">
    <citation type="journal article" date="1985" name="Virology">
        <title>Primary structure of the cleavage site associated with trypsin enhancement of rotavirus SA11 infectivity.</title>
        <authorList>
            <person name="Lopez S."/>
            <person name="Arias C.F."/>
            <person name="Bell J.R."/>
            <person name="Strauss J.H."/>
            <person name="Espejo R.T."/>
        </authorList>
    </citation>
    <scope>NUCLEOTIDE SEQUENCE [GENOMIC RNA]</scope>
</reference>
<reference key="2">
    <citation type="journal article" date="1987" name="Nucleic Acids Res.">
        <title>The nucleotide sequence of the 5' and 3' ends of rotavirus SA11 gene 4.</title>
        <authorList>
            <person name="Lopez S."/>
            <person name="Arias C.F."/>
        </authorList>
    </citation>
    <scope>NUCLEOTIDE SEQUENCE [GENOMIC RNA] OF 1-3 AND 751-776</scope>
</reference>
<reference key="3">
    <citation type="journal article" date="1994" name="EMBO J.">
        <title>Three-dimensional structure of the rotavirus haemagglutinin VP4 by cryo-electron microscopy and difference map analysis.</title>
        <authorList>
            <person name="Yeager M."/>
            <person name="Berriman J.A."/>
            <person name="Baker T.S."/>
            <person name="Bellamy A.R."/>
        </authorList>
    </citation>
    <scope>X-RAY CRYSTALLOGRAPHY (26 ANGSTROMS)</scope>
</reference>
<sequence>MAALIYRQLLTNSYTVELSDEIQEIGSTKTQNVTVNPGPFAQTNYAPVNWGPGETNDSTTVEPVLDGPYQPTTFNPPVSYWMLLAPTNAGVVVEGTNNTNRWLATILIEPNVQQVERTYTLFGQQVQVTVSNDSQTKWKFVDLSKQTQDGNYSQHGSLLSTPKLYGVMKHGGKIYTYNGETPNANTGYYSTTNFDTVNMTAYCDFYIIPLAQEAKCTEYINNGLPPIQNTRNIVPVSIVSRNIVYTRAQPNQDIVVSKTSLWKEMQYNRDIVIRFKFANSIIKSGGLGYKWSEVSFKPANYQYTYTRDGEEVTAHTTCSVNGVNDFNYNGGSLPTDFVISKYEVIKENSFVYIDYWDDSQAFRNMVYVRSLAADLNSVMCTGGDYSFALPVGNYPVMTGGAVSLHSAGVTLSTQFTDFVSLNSLRFRFRLSVEEPPFSILRTRVSGLYGLPAAKPNNSQEYYEIAGRFSLISLVPLNDDYQTPIMNSVTVRQDLERQLGELRDEFNNLSQQIAMSQLIDLALLPLDMFSMFSGIKSTIDAAKSMATNVMKRFKKSSLANSVSTLTDSLSDAASSISRSASVRSVSSTASAWTEVSNIASDINVTTSSISTQTSTISRRLRLKEMATQTDGMNFDDISAAVLKTKIDKSTQLNTNTLPEIVTEASEKFIPNRAYRVIKDDEVLEASIDGKYFAYKVETFEEIPFDVQKFADLVTDSPVISAIIDFKTLKNLNDNYGISRQQALNLLRSDPRVLREFINQDNPIIRNRIESLIMQCRL</sequence>
<evidence type="ECO:0000255" key="1">
    <source>
        <dbReference type="HAMAP-Rule" id="MF_04132"/>
    </source>
</evidence>
<accession>P17463</accession>
<accession>P04508</accession>
<keyword id="KW-0167">Capsid protein</keyword>
<keyword id="KW-0175">Coiled coil</keyword>
<keyword id="KW-1015">Disulfide bond</keyword>
<keyword id="KW-0348">Hemagglutinin</keyword>
<keyword id="KW-1032">Host cell membrane</keyword>
<keyword id="KW-1035">Host cytoplasm</keyword>
<keyword id="KW-1037">Host cytoskeleton</keyword>
<keyword id="KW-1038">Host endoplasmic reticulum</keyword>
<keyword id="KW-1043">Host membrane</keyword>
<keyword id="KW-0945">Host-virus interaction</keyword>
<keyword id="KW-0472">Membrane</keyword>
<keyword id="KW-1152">Outer capsid protein</keyword>
<keyword id="KW-1161">Viral attachment to host cell</keyword>
<keyword id="KW-1162">Viral penetration into host cytoplasm</keyword>
<keyword id="KW-1173">Viral penetration via permeabilization of host membrane</keyword>
<keyword id="KW-0946">Virion</keyword>
<keyword id="KW-1160">Virus entry into host cell</keyword>
<name>VP4_ROTSF</name>
<feature type="chain" id="PRO_0000041117" description="Outer capsid protein VP4" evidence="1">
    <location>
        <begin position="1"/>
        <end position="776"/>
    </location>
</feature>
<feature type="chain" id="PRO_0000041118" description="Outer capsid protein VP8*" evidence="1">
    <location>
        <begin position="1"/>
        <end position="231"/>
    </location>
</feature>
<feature type="chain" id="PRO_0000041119" description="Outer capsid protein VP5*" evidence="1">
    <location>
        <begin position="248"/>
        <end position="776"/>
    </location>
</feature>
<feature type="region of interest" description="Spike head" evidence="1">
    <location>
        <begin position="65"/>
        <end position="224"/>
    </location>
</feature>
<feature type="region of interest" description="Spike body and stalk (antigen domain)" evidence="1">
    <location>
        <begin position="248"/>
        <end position="479"/>
    </location>
</feature>
<feature type="region of interest" description="Hydrophobic; possible role in virus entry into host cell" evidence="1">
    <location>
        <begin position="389"/>
        <end position="409"/>
    </location>
</feature>
<feature type="region of interest" description="Spike foot" evidence="1">
    <location>
        <begin position="510"/>
        <end position="776"/>
    </location>
</feature>
<feature type="coiled-coil region" evidence="1">
    <location>
        <begin position="484"/>
        <end position="518"/>
    </location>
</feature>
<feature type="short sequence motif" description="DGE motif; interaction with ITGA2/ITGB1 heterodimer" evidence="1">
    <location>
        <begin position="308"/>
        <end position="310"/>
    </location>
</feature>
<feature type="short sequence motif" description="YGL motif; interaction with ITGA4" evidence="1">
    <location>
        <begin position="448"/>
        <end position="450"/>
    </location>
</feature>
<feature type="short sequence motif" description="KID motif; interaction with HSPA8" evidence="1">
    <location>
        <begin position="644"/>
        <end position="646"/>
    </location>
</feature>
<feature type="site" description="Binding to sialic acid" evidence="1">
    <location>
        <position position="101"/>
    </location>
</feature>
<feature type="site" description="Binding to sialic acid" evidence="1">
    <location>
        <position position="190"/>
    </location>
</feature>
<feature type="site" description="Cleavage" evidence="1">
    <location>
        <begin position="231"/>
        <end position="232"/>
    </location>
</feature>
<feature type="site" description="Cleavage" evidence="1">
    <location>
        <begin position="241"/>
        <end position="242"/>
    </location>
</feature>
<feature type="site" description="Cleavage; associated with enhancement of infectivity" evidence="1">
    <location>
        <begin position="247"/>
        <end position="248"/>
    </location>
</feature>
<feature type="disulfide bond" evidence="1">
    <location>
        <begin position="203"/>
        <end position="216"/>
    </location>
</feature>
<feature type="disulfide bond" evidence="1">
    <location>
        <begin position="318"/>
        <end position="380"/>
    </location>
</feature>
<dbReference type="EMBL" id="Y00336">
    <property type="protein sequence ID" value="CAA68424.1"/>
    <property type="molecule type" value="Genomic_RNA"/>
</dbReference>
<dbReference type="PIR" id="A04129">
    <property type="entry name" value="VPXR4S"/>
</dbReference>
<dbReference type="PIR" id="B31159">
    <property type="entry name" value="VPXRT1"/>
</dbReference>
<dbReference type="SMR" id="P17463"/>
<dbReference type="GO" id="GO:0044172">
    <property type="term" value="C:host cell endoplasmic reticulum-Golgi intermediate compartment"/>
    <property type="evidence" value="ECO:0007669"/>
    <property type="project" value="UniProtKB-SubCell"/>
</dbReference>
<dbReference type="GO" id="GO:0020002">
    <property type="term" value="C:host cell plasma membrane"/>
    <property type="evidence" value="ECO:0007669"/>
    <property type="project" value="UniProtKB-SubCell"/>
</dbReference>
<dbReference type="GO" id="GO:0044168">
    <property type="term" value="C:host cell rough endoplasmic reticulum"/>
    <property type="evidence" value="ECO:0007669"/>
    <property type="project" value="UniProtKB-SubCell"/>
</dbReference>
<dbReference type="GO" id="GO:0044163">
    <property type="term" value="C:host cytoskeleton"/>
    <property type="evidence" value="ECO:0007669"/>
    <property type="project" value="UniProtKB-SubCell"/>
</dbReference>
<dbReference type="GO" id="GO:0016020">
    <property type="term" value="C:membrane"/>
    <property type="evidence" value="ECO:0007669"/>
    <property type="project" value="UniProtKB-KW"/>
</dbReference>
<dbReference type="GO" id="GO:0039624">
    <property type="term" value="C:viral outer capsid"/>
    <property type="evidence" value="ECO:0007669"/>
    <property type="project" value="UniProtKB-UniRule"/>
</dbReference>
<dbReference type="GO" id="GO:0039665">
    <property type="term" value="P:permeabilization of host organelle membrane involved in viral entry into host cell"/>
    <property type="evidence" value="ECO:0007669"/>
    <property type="project" value="UniProtKB-UniRule"/>
</dbReference>
<dbReference type="GO" id="GO:0019062">
    <property type="term" value="P:virion attachment to host cell"/>
    <property type="evidence" value="ECO:0007669"/>
    <property type="project" value="UniProtKB-UniRule"/>
</dbReference>
<dbReference type="Gene3D" id="1.20.5.170">
    <property type="match status" value="1"/>
</dbReference>
<dbReference type="Gene3D" id="2.60.120.200">
    <property type="match status" value="1"/>
</dbReference>
<dbReference type="HAMAP" id="MF_04132">
    <property type="entry name" value="Rota_A_VP4"/>
    <property type="match status" value="1"/>
</dbReference>
<dbReference type="HAMAP" id="MF_04125">
    <property type="entry name" value="Rota_VP4"/>
    <property type="match status" value="1"/>
</dbReference>
<dbReference type="InterPro" id="IPR013320">
    <property type="entry name" value="ConA-like_dom_sf"/>
</dbReference>
<dbReference type="InterPro" id="IPR042546">
    <property type="entry name" value="Rota_A_VP4"/>
</dbReference>
<dbReference type="InterPro" id="IPR035330">
    <property type="entry name" value="Rota_VP4_MID"/>
</dbReference>
<dbReference type="InterPro" id="IPR038017">
    <property type="entry name" value="Rota_VP4_MID_sf"/>
</dbReference>
<dbReference type="InterPro" id="IPR000416">
    <property type="entry name" value="VP4_concanavalin-like"/>
</dbReference>
<dbReference type="InterPro" id="IPR035329">
    <property type="entry name" value="VP4_helical"/>
</dbReference>
<dbReference type="Pfam" id="PF17477">
    <property type="entry name" value="Rota_VP4_MID"/>
    <property type="match status" value="1"/>
</dbReference>
<dbReference type="Pfam" id="PF00426">
    <property type="entry name" value="VP4_haemagglut"/>
    <property type="match status" value="1"/>
</dbReference>
<dbReference type="Pfam" id="PF17478">
    <property type="entry name" value="VP4_helical"/>
    <property type="match status" value="1"/>
</dbReference>
<dbReference type="SUPFAM" id="SSF49899">
    <property type="entry name" value="Concanavalin A-like lectins/glucanases"/>
    <property type="match status" value="1"/>
</dbReference>
<dbReference type="SUPFAM" id="SSF111379">
    <property type="entry name" value="VP4 membrane interaction domain"/>
    <property type="match status" value="1"/>
</dbReference>
<comment type="function">
    <molecule>Outer capsid protein VP4</molecule>
    <text evidence="1">Spike-forming protein that mediates virion attachment to the host epithelial cell receptors and plays a major role in cell penetration, determination of host range restriction and virulence. Rotavirus attachment and entry into the host cell probably involves multiple sequential contacts between the outer capsid proteins VP4 and VP7, and the cell receptors. It is subsequently lost, together with VP7, following virus entry into the host cell. Following entry into the host cell, low intracellular or intravesicular Ca(2+) concentration probably causes the calcium-stabilized VP7 trimers to dissociate from the virion. This step is probably necessary for the membrane-disrupting entry step and the release of VP4, which is locked onto the virion by VP7. During the virus exit from the host cell, VP4 seems to be required to target the newly formed virions to the host cell lipid rafts.</text>
</comment>
<comment type="function">
    <molecule>Outer capsid protein VP5*</molecule>
    <text evidence="1">Forms the spike 'foot' and 'body' and acts as a membrane permeabilization protein that mediates release of viral particles from endosomal compartments into the cytoplasm. During entry, the part of VP5* that protrudes from the virus folds back on itself and reorganizes from a local dimer to a trimer. This reorganization may be linked to membrane penetration by exposing VP5* hydrophobic region. In integrin-dependent strains, VP5* targets the integrin heterodimer ITGA2/ITGB1 for cell attachment.</text>
</comment>
<comment type="function">
    <molecule>Outer capsid protein VP8*</molecule>
    <text evidence="1">Forms the head of the spikes and mediates the recognition of specific host cell surface glycans. It is the viral hemagglutinin and an important target of neutralizing antibodies. In sialic acid-dependent strains, VP8* binds to host cell sialic acid, most probably a ganglioside, providing the initial contact. In some other strains, VP8* mediates the attachment to histo-blood group antigens (HBGAs) for viral entry.</text>
</comment>
<comment type="subunit">
    <molecule>Outer capsid protein VP4</molecule>
    <text evidence="1">Homotrimer. VP4 adopts a dimeric appearance above the capsid surface, while forming a trimeric base anchored inside the capsid layer. Only hints of the third molecule are observed above the capsid surface. It probably performs a series of molecular rearrangements during viral entry. Prior to trypsin cleavage, it is flexible. The priming trypsin cleavage triggers its rearrangement into rigid spikes with approximate two-fold symmetry of their protruding parts. After an unknown second triggering event, cleaved VP4 may undergo another rearrangement, in which two VP5* subunits fold back on themselves and join a third subunit to form a tightly associated trimer, shaped like a folded umbrella. Interacts with VP6. Interacts with VP7.</text>
</comment>
<comment type="subunit">
    <molecule>Outer capsid protein VP5*</molecule>
    <text evidence="1">Homotrimer. The trimer is coiled-coil stabilized by its C-terminus, however, its N-terminus, known as antigen domain or 'body', seems to be flexible allowing it to self-associate either as a dimer or a trimer.</text>
</comment>
<comment type="subcellular location">
    <molecule>Outer capsid protein VP4</molecule>
    <subcellularLocation>
        <location evidence="1">Virion</location>
    </subcellularLocation>
    <subcellularLocation>
        <location evidence="1">Host rough endoplasmic reticulum</location>
    </subcellularLocation>
    <subcellularLocation>
        <location evidence="1">Host cell membrane</location>
    </subcellularLocation>
    <subcellularLocation>
        <location evidence="1">Host cytoplasm</location>
        <location evidence="1">Host cytoskeleton</location>
    </subcellularLocation>
    <subcellularLocation>
        <location evidence="1">Host endoplasmic reticulum-Golgi intermediate compartment</location>
    </subcellularLocation>
    <text evidence="1">The outer layer contains 180 copies of VP4, grouped as 60 dimers. Immature double-layered particles assembled in the cytoplasm bud across the membrane of the endoplasmic reticulum, acquiring during this process a transient lipid membrane that is modified with the ER resident viral glycoproteins NSP4 and VP7; these enveloped particles also contain VP4. As the particles move towards the interior of the ER cisternae, the transient lipid membrane and the non-structural protein NSP4 are lost, while the virus surface proteins VP4 and VP7 rearrange to form the outermost virus protein layer, yielding mature infectious triple-layered particles. VP4 also seems to associate with lipid rafts of the host cell membrane probably for the exit of the virus from the infected cell by an alternate pathway.</text>
</comment>
<comment type="subcellular location">
    <molecule>Outer capsid protein VP8*</molecule>
    <subcellularLocation>
        <location evidence="1">Virion</location>
    </subcellularLocation>
    <text evidence="1">Outer capsid protein.</text>
</comment>
<comment type="subcellular location">
    <molecule>Outer capsid protein VP5*</molecule>
    <subcellularLocation>
        <location evidence="1">Virion</location>
    </subcellularLocation>
    <text evidence="1">Outer capsid protein.</text>
</comment>
<comment type="domain">
    <molecule>Outer capsid protein VP4</molecule>
    <text evidence="1">The VP4 spike is divided into a foot, a stalk and body, and a head.</text>
</comment>
<comment type="PTM">
    <molecule>Outer capsid protein VP4</molecule>
    <text evidence="1">Proteolytic cleavage by trypsin results in activation of VP4 functions and greatly increases infectivity. The penetration into the host cell is dependent on trypsin treatment of VP4. It produces two peptides, VP5* and VP8* that remain associated with the virion. Cleavage of VP4 by trypsin probably occurs in vivo in the lumen of the intestine prior to infection of enterocytes. Trypsin seems to be incorporated into the three-layered viral particles but remains inactive as long as the viral outer capsid is intact and would only be activated upon the solubilization of the latter.</text>
</comment>
<comment type="miscellaneous">
    <text evidence="1">In group A rotaviruses, VP4 defines the P serotype.</text>
</comment>
<comment type="miscellaneous">
    <text evidence="1">Some rotavirus strains are neuraminidase-sensitive and require sialic acid to attach to the cell surface. Some rotavirus strains are integrin-dependent. Some rotavirus strains depend on ganglioside for their entry into the host cell. Hsp70 also seems to be involved in the entry of some strains.</text>
</comment>
<comment type="miscellaneous">
    <text evidence="1">This strain probably uses sialic acid to attach to the host cell.</text>
</comment>
<comment type="similarity">
    <text evidence="1">Belongs to the rotavirus VP4 family.</text>
</comment>
<protein>
    <recommendedName>
        <fullName evidence="1">Outer capsid protein VP4</fullName>
    </recommendedName>
    <alternativeName>
        <fullName evidence="1">Hemagglutinin</fullName>
    </alternativeName>
    <component>
        <recommendedName>
            <fullName evidence="1">Outer capsid protein VP8*</fullName>
        </recommendedName>
    </component>
    <component>
        <recommendedName>
            <fullName evidence="1">Outer capsid protein VP5*</fullName>
        </recommendedName>
    </component>
</protein>
<organismHost>
    <name type="scientific">Macaca mulatta</name>
    <name type="common">Rhesus macaque</name>
    <dbReference type="NCBI Taxonomy" id="9544"/>
</organismHost>